<dbReference type="EC" id="2.7.7.6" evidence="1"/>
<dbReference type="EMBL" id="CP000738">
    <property type="protein sequence ID" value="ABR59831.1"/>
    <property type="molecule type" value="Genomic_DNA"/>
</dbReference>
<dbReference type="RefSeq" id="WP_011975166.1">
    <property type="nucleotide sequence ID" value="NC_009636.1"/>
</dbReference>
<dbReference type="RefSeq" id="YP_001326666.1">
    <property type="nucleotide sequence ID" value="NC_009636.1"/>
</dbReference>
<dbReference type="SMR" id="A6U851"/>
<dbReference type="STRING" id="366394.Smed_0978"/>
<dbReference type="GeneID" id="61614978"/>
<dbReference type="KEGG" id="smd:Smed_0978"/>
<dbReference type="PATRIC" id="fig|366394.8.peg.4098"/>
<dbReference type="eggNOG" id="COG0085">
    <property type="taxonomic scope" value="Bacteria"/>
</dbReference>
<dbReference type="HOGENOM" id="CLU_000524_4_0_5"/>
<dbReference type="OrthoDB" id="9803954at2"/>
<dbReference type="Proteomes" id="UP000001108">
    <property type="component" value="Chromosome"/>
</dbReference>
<dbReference type="GO" id="GO:0000428">
    <property type="term" value="C:DNA-directed RNA polymerase complex"/>
    <property type="evidence" value="ECO:0007669"/>
    <property type="project" value="UniProtKB-KW"/>
</dbReference>
<dbReference type="GO" id="GO:0003677">
    <property type="term" value="F:DNA binding"/>
    <property type="evidence" value="ECO:0007669"/>
    <property type="project" value="UniProtKB-UniRule"/>
</dbReference>
<dbReference type="GO" id="GO:0003899">
    <property type="term" value="F:DNA-directed RNA polymerase activity"/>
    <property type="evidence" value="ECO:0007669"/>
    <property type="project" value="UniProtKB-UniRule"/>
</dbReference>
<dbReference type="GO" id="GO:0032549">
    <property type="term" value="F:ribonucleoside binding"/>
    <property type="evidence" value="ECO:0007669"/>
    <property type="project" value="InterPro"/>
</dbReference>
<dbReference type="GO" id="GO:0006351">
    <property type="term" value="P:DNA-templated transcription"/>
    <property type="evidence" value="ECO:0007669"/>
    <property type="project" value="UniProtKB-UniRule"/>
</dbReference>
<dbReference type="CDD" id="cd00653">
    <property type="entry name" value="RNA_pol_B_RPB2"/>
    <property type="match status" value="1"/>
</dbReference>
<dbReference type="FunFam" id="2.40.50.100:FF:000006">
    <property type="entry name" value="DNA-directed RNA polymerase subunit beta"/>
    <property type="match status" value="1"/>
</dbReference>
<dbReference type="FunFam" id="3.90.1800.10:FF:000001">
    <property type="entry name" value="DNA-directed RNA polymerase subunit beta"/>
    <property type="match status" value="1"/>
</dbReference>
<dbReference type="Gene3D" id="2.40.50.100">
    <property type="match status" value="1"/>
</dbReference>
<dbReference type="Gene3D" id="2.40.50.150">
    <property type="match status" value="1"/>
</dbReference>
<dbReference type="Gene3D" id="3.90.1100.10">
    <property type="match status" value="2"/>
</dbReference>
<dbReference type="Gene3D" id="2.30.150.10">
    <property type="entry name" value="DNA-directed RNA polymerase, beta subunit, external 1 domain"/>
    <property type="match status" value="1"/>
</dbReference>
<dbReference type="Gene3D" id="2.40.270.10">
    <property type="entry name" value="DNA-directed RNA polymerase, subunit 2, domain 6"/>
    <property type="match status" value="1"/>
</dbReference>
<dbReference type="Gene3D" id="3.90.1800.10">
    <property type="entry name" value="RNA polymerase alpha subunit dimerisation domain"/>
    <property type="match status" value="1"/>
</dbReference>
<dbReference type="Gene3D" id="3.90.1110.10">
    <property type="entry name" value="RNA polymerase Rpb2, domain 2"/>
    <property type="match status" value="1"/>
</dbReference>
<dbReference type="HAMAP" id="MF_01321">
    <property type="entry name" value="RNApol_bact_RpoB"/>
    <property type="match status" value="1"/>
</dbReference>
<dbReference type="InterPro" id="IPR042107">
    <property type="entry name" value="DNA-dir_RNA_pol_bsu_ext_1_sf"/>
</dbReference>
<dbReference type="InterPro" id="IPR019462">
    <property type="entry name" value="DNA-dir_RNA_pol_bsu_external_1"/>
</dbReference>
<dbReference type="InterPro" id="IPR015712">
    <property type="entry name" value="DNA-dir_RNA_pol_su2"/>
</dbReference>
<dbReference type="InterPro" id="IPR007120">
    <property type="entry name" value="DNA-dir_RNAP_su2_dom"/>
</dbReference>
<dbReference type="InterPro" id="IPR037033">
    <property type="entry name" value="DNA-dir_RNAP_su2_hyb_sf"/>
</dbReference>
<dbReference type="InterPro" id="IPR010243">
    <property type="entry name" value="RNA_pol_bsu_bac"/>
</dbReference>
<dbReference type="InterPro" id="IPR007121">
    <property type="entry name" value="RNA_pol_bsu_CS"/>
</dbReference>
<dbReference type="InterPro" id="IPR007644">
    <property type="entry name" value="RNA_pol_bsu_protrusion"/>
</dbReference>
<dbReference type="InterPro" id="IPR007642">
    <property type="entry name" value="RNA_pol_Rpb2_2"/>
</dbReference>
<dbReference type="InterPro" id="IPR037034">
    <property type="entry name" value="RNA_pol_Rpb2_2_sf"/>
</dbReference>
<dbReference type="InterPro" id="IPR007645">
    <property type="entry name" value="RNA_pol_Rpb2_3"/>
</dbReference>
<dbReference type="InterPro" id="IPR007641">
    <property type="entry name" value="RNA_pol_Rpb2_7"/>
</dbReference>
<dbReference type="InterPro" id="IPR014724">
    <property type="entry name" value="RNA_pol_RPB2_OB-fold"/>
</dbReference>
<dbReference type="NCBIfam" id="NF001616">
    <property type="entry name" value="PRK00405.1"/>
    <property type="match status" value="1"/>
</dbReference>
<dbReference type="NCBIfam" id="TIGR02013">
    <property type="entry name" value="rpoB"/>
    <property type="match status" value="1"/>
</dbReference>
<dbReference type="PANTHER" id="PTHR20856">
    <property type="entry name" value="DNA-DIRECTED RNA POLYMERASE I SUBUNIT 2"/>
    <property type="match status" value="1"/>
</dbReference>
<dbReference type="Pfam" id="PF04563">
    <property type="entry name" value="RNA_pol_Rpb2_1"/>
    <property type="match status" value="1"/>
</dbReference>
<dbReference type="Pfam" id="PF04561">
    <property type="entry name" value="RNA_pol_Rpb2_2"/>
    <property type="match status" value="2"/>
</dbReference>
<dbReference type="Pfam" id="PF04565">
    <property type="entry name" value="RNA_pol_Rpb2_3"/>
    <property type="match status" value="1"/>
</dbReference>
<dbReference type="Pfam" id="PF10385">
    <property type="entry name" value="RNA_pol_Rpb2_45"/>
    <property type="match status" value="1"/>
</dbReference>
<dbReference type="Pfam" id="PF00562">
    <property type="entry name" value="RNA_pol_Rpb2_6"/>
    <property type="match status" value="1"/>
</dbReference>
<dbReference type="Pfam" id="PF04560">
    <property type="entry name" value="RNA_pol_Rpb2_7"/>
    <property type="match status" value="1"/>
</dbReference>
<dbReference type="SUPFAM" id="SSF64484">
    <property type="entry name" value="beta and beta-prime subunits of DNA dependent RNA-polymerase"/>
    <property type="match status" value="1"/>
</dbReference>
<dbReference type="PROSITE" id="PS01166">
    <property type="entry name" value="RNA_POL_BETA"/>
    <property type="match status" value="1"/>
</dbReference>
<accession>A6U851</accession>
<gene>
    <name evidence="1" type="primary">rpoB</name>
    <name type="ordered locus">Smed_0978</name>
</gene>
<evidence type="ECO:0000255" key="1">
    <source>
        <dbReference type="HAMAP-Rule" id="MF_01321"/>
    </source>
</evidence>
<organism>
    <name type="scientific">Sinorhizobium medicae (strain WSM419)</name>
    <name type="common">Ensifer medicae</name>
    <dbReference type="NCBI Taxonomy" id="366394"/>
    <lineage>
        <taxon>Bacteria</taxon>
        <taxon>Pseudomonadati</taxon>
        <taxon>Pseudomonadota</taxon>
        <taxon>Alphaproteobacteria</taxon>
        <taxon>Hyphomicrobiales</taxon>
        <taxon>Rhizobiaceae</taxon>
        <taxon>Sinorhizobium/Ensifer group</taxon>
        <taxon>Sinorhizobium</taxon>
    </lineage>
</organism>
<proteinExistence type="inferred from homology"/>
<sequence>MAQTLSFNGRRRVRKFFGKIPEVAEMPNLIEVQKASYDQFLMVDEPQGGRPDEGLQAVFKSVFPIKDFSGASMLEFVSYEFEAPKFDVEECRQRDLTYAAPLKVTLRLIVFDIDEDTGAKSIKDIKEQNVYMGDMPLMTDNGTFIVNGTERVIVSQMHRSPGVFFDHDKGKSHSSGKLLFAARVIPYRGSWLDIEFDAKDIVHARIDRRRKIPVTSLLMALGMDGEEILDTFYTKSLYQRDGEGWRVPFQPDALKGQKALADLIDADTGEVVVEGGKKLTPRLLRQLQDKGLKALKATDDDLYGNYLAEDVVNFETGEIYLEAGDEIDEKTLPVILSAGFDEIPVLDIDHINIGAYIRNTLAADKNENRQDALFDIYRVMRPGEPPTMDSAEAMFNALFFDAERYDLSAVGRVKMNMRLDLDVPDTVRTLRKEDILAVVKMLVELRDGKGEIDDIDNLGNRRVRSVGELMENQYRLGLLRMERAIKERMSSIEIDTVMPQDLINAKPAAAAVREFFGSSQLSQFMDQVNPLSEITHKRRLSALGPGGLTRERAGFEVRDVHPTHYGRICPIETPEGPNIGLINSLATFARVNKYGFIESPYRKIVDGKVTSDVVYLSAMEEAKYHVAQANSVLDEDGSFSEEFVVCRHAGEVMLAPRDNINLMDVSPKQLVSVAAALIPFLENDDANRALMGSNMQRQAVPLLRAEAPFVGTGMEPVVARDSGAAIAARRGGIVDQVDATRIVIRATEDLDPSKSGVDIYRLQKFQRSNQNTCVNQRPLVTVGDVLNKGDIIADGPSTDLGDLALGRNALVAFMPWNGYNYEDSILLSERIVRDDVFTSIHIEEFEVMARDTKLGPEEITRDIPNVSEEALKNLDEAGIVYIGAEVQPGDILVGKITPKGESPMTPEEKLLRAIFGEKASDVRDTSMRMPPGTFGTVVEVRVFNRHGVEKDERAMAIEREEIERLAKDRDDEQAILDRNVYARLVDMLRGHVAVAGPKGFKKGTELSNAVISEYPRSQWWMFAIEDEKAQGEIEALRGQYDESKSRLEQRFMDKVEKVQRGDEMPPGVMKMVKVFVAVKRKIQPGDKMAGRHGNKGVVSRIVPIEDMPFLEDGTHVDVVLNPLGVPSRMNVGQILETHLGWACAGMGKKIGAMLDAYKAGADIQPLRDTIDSVIGSGPKGEPIKQYDDESIVRLAEQTRRGVSIATPVFDGAVEADVNEMLEQAGLKVTGQSTLYDGRTGETFDRQVTVGYIYMLKLNHLVDDKIHARSIGPYSLVTQQPLGGKAQFGGQRFGEMEVWALEAYGAAYTLQEMLTVKSDDVAGRTKVYEAIVRGDDTFEAGIPESFNVLVKEMRSLGLSVELENSKVDEVGASAQLPDAAE</sequence>
<comment type="function">
    <text evidence="1">DNA-dependent RNA polymerase catalyzes the transcription of DNA into RNA using the four ribonucleoside triphosphates as substrates.</text>
</comment>
<comment type="catalytic activity">
    <reaction evidence="1">
        <text>RNA(n) + a ribonucleoside 5'-triphosphate = RNA(n+1) + diphosphate</text>
        <dbReference type="Rhea" id="RHEA:21248"/>
        <dbReference type="Rhea" id="RHEA-COMP:14527"/>
        <dbReference type="Rhea" id="RHEA-COMP:17342"/>
        <dbReference type="ChEBI" id="CHEBI:33019"/>
        <dbReference type="ChEBI" id="CHEBI:61557"/>
        <dbReference type="ChEBI" id="CHEBI:140395"/>
        <dbReference type="EC" id="2.7.7.6"/>
    </reaction>
</comment>
<comment type="subunit">
    <text evidence="1">The RNAP catalytic core consists of 2 alpha, 1 beta, 1 beta' and 1 omega subunit. When a sigma factor is associated with the core the holoenzyme is formed, which can initiate transcription.</text>
</comment>
<comment type="similarity">
    <text evidence="1">Belongs to the RNA polymerase beta chain family.</text>
</comment>
<protein>
    <recommendedName>
        <fullName evidence="1">DNA-directed RNA polymerase subunit beta</fullName>
        <shortName evidence="1">RNAP subunit beta</shortName>
        <ecNumber evidence="1">2.7.7.6</ecNumber>
    </recommendedName>
    <alternativeName>
        <fullName evidence="1">RNA polymerase subunit beta</fullName>
    </alternativeName>
    <alternativeName>
        <fullName evidence="1">Transcriptase subunit beta</fullName>
    </alternativeName>
</protein>
<name>RPOB_SINMW</name>
<reference key="1">
    <citation type="submission" date="2007-06" db="EMBL/GenBank/DDBJ databases">
        <title>Complete sequence of Sinorhizobium medicae WSM419 chromosome.</title>
        <authorList>
            <consortium name="US DOE Joint Genome Institute"/>
            <person name="Copeland A."/>
            <person name="Lucas S."/>
            <person name="Lapidus A."/>
            <person name="Barry K."/>
            <person name="Glavina del Rio T."/>
            <person name="Dalin E."/>
            <person name="Tice H."/>
            <person name="Pitluck S."/>
            <person name="Chain P."/>
            <person name="Malfatti S."/>
            <person name="Shin M."/>
            <person name="Vergez L."/>
            <person name="Schmutz J."/>
            <person name="Larimer F."/>
            <person name="Land M."/>
            <person name="Hauser L."/>
            <person name="Kyrpides N."/>
            <person name="Mikhailova N."/>
            <person name="Reeve W.G."/>
            <person name="Richardson P."/>
        </authorList>
    </citation>
    <scope>NUCLEOTIDE SEQUENCE [LARGE SCALE GENOMIC DNA]</scope>
    <source>
        <strain>WSM419</strain>
    </source>
</reference>
<keyword id="KW-0240">DNA-directed RNA polymerase</keyword>
<keyword id="KW-0548">Nucleotidyltransferase</keyword>
<keyword id="KW-0804">Transcription</keyword>
<keyword id="KW-0808">Transferase</keyword>
<feature type="chain" id="PRO_1000051983" description="DNA-directed RNA polymerase subunit beta">
    <location>
        <begin position="1"/>
        <end position="1380"/>
    </location>
</feature>